<feature type="chain" id="PRO_0000210648" description="Putative type II restriction enzyme and methyltransferase RM.MpnORF110P C-terminus">
    <location>
        <begin position="1"/>
        <end position="718"/>
    </location>
</feature>
<protein>
    <recommendedName>
        <fullName evidence="2">Putative type II restriction enzyme and methyltransferase RM.MpnORF110P C-terminus</fullName>
    </recommendedName>
</protein>
<proteinExistence type="uncertain"/>
<organism>
    <name type="scientific">Mycoplasma pneumoniae (strain ATCC 29342 / M129 / Subtype 1)</name>
    <name type="common">Mycoplasmoides pneumoniae</name>
    <dbReference type="NCBI Taxonomy" id="272634"/>
    <lineage>
        <taxon>Bacteria</taxon>
        <taxon>Bacillati</taxon>
        <taxon>Mycoplasmatota</taxon>
        <taxon>Mycoplasmoidales</taxon>
        <taxon>Mycoplasmoidaceae</taxon>
        <taxon>Mycoplasmoides</taxon>
    </lineage>
</organism>
<dbReference type="EMBL" id="U00089">
    <property type="protein sequence ID" value="AAB95692.1"/>
    <property type="molecule type" value="Genomic_DNA"/>
</dbReference>
<dbReference type="PIR" id="S73370">
    <property type="entry name" value="S73370"/>
</dbReference>
<dbReference type="RefSeq" id="NP_109798.1">
    <property type="nucleotide sequence ID" value="NC_000912.1"/>
</dbReference>
<dbReference type="STRING" id="272634.MPN_110"/>
<dbReference type="REBASE" id="152957">
    <property type="entry name" value="Ssp60837ORF1696P"/>
</dbReference>
<dbReference type="EnsemblBacteria" id="AAB95692">
    <property type="protein sequence ID" value="AAB95692"/>
    <property type="gene ID" value="MPN_110"/>
</dbReference>
<dbReference type="KEGG" id="mpn:MPN_110"/>
<dbReference type="PATRIC" id="fig|272634.6.peg.116"/>
<dbReference type="HOGENOM" id="CLU_384870_0_0_14"/>
<dbReference type="OrthoDB" id="9813673at2"/>
<dbReference type="BioCyc" id="MPNE272634:G1GJ3-188-MONOMER"/>
<dbReference type="Proteomes" id="UP000000808">
    <property type="component" value="Chromosome"/>
</dbReference>
<dbReference type="GO" id="GO:0005524">
    <property type="term" value="F:ATP binding"/>
    <property type="evidence" value="ECO:0007669"/>
    <property type="project" value="InterPro"/>
</dbReference>
<dbReference type="GO" id="GO:0003677">
    <property type="term" value="F:DNA binding"/>
    <property type="evidence" value="ECO:0007669"/>
    <property type="project" value="InterPro"/>
</dbReference>
<dbReference type="GO" id="GO:0016787">
    <property type="term" value="F:hydrolase activity"/>
    <property type="evidence" value="ECO:0007669"/>
    <property type="project" value="InterPro"/>
</dbReference>
<dbReference type="Gene3D" id="3.40.50.300">
    <property type="entry name" value="P-loop containing nucleotide triphosphate hydrolases"/>
    <property type="match status" value="2"/>
</dbReference>
<dbReference type="InterPro" id="IPR006935">
    <property type="entry name" value="Helicase/UvrB_N"/>
</dbReference>
<dbReference type="InterPro" id="IPR027417">
    <property type="entry name" value="P-loop_NTPase"/>
</dbReference>
<dbReference type="Pfam" id="PF04851">
    <property type="entry name" value="ResIII"/>
    <property type="match status" value="1"/>
</dbReference>
<dbReference type="SUPFAM" id="SSF52540">
    <property type="entry name" value="P-loop containing nucleoside triphosphate hydrolases"/>
    <property type="match status" value="1"/>
</dbReference>
<evidence type="ECO:0000269" key="1">
    <source>
    </source>
</evidence>
<evidence type="ECO:0000303" key="2">
    <source>
    </source>
</evidence>
<sequence>MKIRISLNILAKFLDSFAHLLFLKNKEIYTPRKEQAACVEVLERYFQANPENGRFLMNCKMRFGKCFTLYSYAQKNNINKILILTFVPAVEESLKDDLNHIEKNYKFYTDDDLQKSNFDLKNQNEPYVVFLSLQNVLGKQRIDGAKTDFDKERISKLQEIDFDLIVFDEYHYGANKKRTQIKVEKVNKKIDNPEQQDNQDDAEEELASTFKLKDIKSKFQFSYKQLVCLSGTPFSSLRNNEFSSKDQVFTYSYFDEQKAKSAENHPLKLGQYGIFPEMNIYCFELAEIFTAQEQEIFITPGKGKNKLPEISFRKLFQTENVSKESSKPVYRFVNENLVEKLIDSLIDKRKGFSHTPLSWENIDKHKHSLLILPTRVACFALANLLKNHWYFENNDFQIINMSESQFGNGKKALIELNKHLDEAKKTNKNTLTITVAKLTIGITVKEWSTVFFLKDLKGAESYFQTIFRIQTPYIKNCKNLKEICYVYDFNMYRCLEVTNEYSKQTQTDPKFSASWFQNLDKFLPIYLVRGDEIQKTDPEILQKYEYFIMDKRAFSTRWMDESNIIDIDVLCNVGQDEDAQKILKKILAHKKFKSSKKKREFEDVHLEKSPKSEAFSEGVRSGKDYAAEQGNVLEELENFWNFNQALEQKAKAEFQQKNFDDNEWNNYKKGFNFGVNKHFEDKVSIKKIVQNKIKDFKKRKGRTTSTFKKWKWLYFWWE</sequence>
<gene>
    <name type="ordered locus">MPN_110</name>
    <name type="ORF">C09_orf718</name>
    <name type="ORF">MP044</name>
</gene>
<comment type="function">
    <text evidence="2">Corresponds to the C-terminus of a putative G subtype type II restriction/methylase subunit.</text>
</comment>
<comment type="caution">
    <text evidence="1">Could be the product of a pseudogene; while the translated protein of the N-terminal section has been identifed, this section has not been seen by mass spectrometry.</text>
</comment>
<name>TRRMC_MYCPN</name>
<keyword id="KW-1185">Reference proteome</keyword>
<accession>P75452</accession>
<reference key="1">
    <citation type="journal article" date="1996" name="Nucleic Acids Res.">
        <title>Complete sequence analysis of the genome of the bacterium Mycoplasma pneumoniae.</title>
        <authorList>
            <person name="Himmelreich R."/>
            <person name="Hilbert H."/>
            <person name="Plagens H."/>
            <person name="Pirkl E."/>
            <person name="Li B.-C."/>
            <person name="Herrmann R."/>
        </authorList>
    </citation>
    <scope>NUCLEOTIDE SEQUENCE [LARGE SCALE GENOMIC DNA]</scope>
    <source>
        <strain>ATCC 29342 / M129 / Subtype 1</strain>
    </source>
</reference>
<reference key="2">
    <citation type="journal article" date="2003" name="Nucleic Acids Res.">
        <title>A nomenclature for restriction enzymes, DNA methyltransferases, homing endonucleases and their genes.</title>
        <authorList>
            <person name="Roberts R.J."/>
            <person name="Belfort M."/>
            <person name="Bestor T."/>
            <person name="Bhagwat A.S."/>
            <person name="Bickle T.A."/>
            <person name="Bitinaite J."/>
            <person name="Blumenthal R.M."/>
            <person name="Degtyarev S.K."/>
            <person name="Dryden D.T."/>
            <person name="Dybvig K."/>
            <person name="Firman K."/>
            <person name="Gromova E.S."/>
            <person name="Gumport R.I."/>
            <person name="Halford S.E."/>
            <person name="Hattman S."/>
            <person name="Heitman J."/>
            <person name="Hornby D.P."/>
            <person name="Janulaitis A."/>
            <person name="Jeltsch A."/>
            <person name="Josephsen J."/>
            <person name="Kiss A."/>
            <person name="Klaenhammer T.R."/>
            <person name="Kobayashi I."/>
            <person name="Kong H."/>
            <person name="Krueger D.H."/>
            <person name="Lacks S."/>
            <person name="Marinus M.G."/>
            <person name="Miyahara M."/>
            <person name="Morgan R.D."/>
            <person name="Murray N.E."/>
            <person name="Nagaraja V."/>
            <person name="Piekarowicz A."/>
            <person name="Pingoud A."/>
            <person name="Raleigh E."/>
            <person name="Rao D.N."/>
            <person name="Reich N."/>
            <person name="Repin V.E."/>
            <person name="Selker E.U."/>
            <person name="Shaw P.C."/>
            <person name="Stein D.C."/>
            <person name="Stoddard B.L."/>
            <person name="Szybalski W."/>
            <person name="Trautner T.A."/>
            <person name="Van Etten J.L."/>
            <person name="Vitor J.M."/>
            <person name="Wilson G.G."/>
            <person name="Xu S.Y."/>
        </authorList>
    </citation>
    <scope>NOMENCLATURE</scope>
    <scope>SUBTYPE</scope>
</reference>
<reference key="3">
    <citation type="journal article" date="2013" name="PLoS Genet.">
        <title>Comprehensive methylome characterization of Mycoplasma genitalium and Mycoplasma pneumoniae at single-base resolution.</title>
        <authorList>
            <person name="Lluch-Senar M."/>
            <person name="Luong K."/>
            <person name="Llorens-Rico V."/>
            <person name="Delgado J."/>
            <person name="Fang G."/>
            <person name="Spittle K."/>
            <person name="Clark T.A."/>
            <person name="Schadt E."/>
            <person name="Turner S.W."/>
            <person name="Korlach J."/>
            <person name="Serrano L."/>
        </authorList>
    </citation>
    <scope>DISCUSSION OF SEQUENCE</scope>
    <source>
        <strain>ATCC 29342 / M129 / Subtype 1</strain>
    </source>
</reference>